<keyword id="KW-0025">Alternative splicing</keyword>
<keyword id="KW-0900">Congenital disorder of glycosylation</keyword>
<keyword id="KW-0256">Endoplasmic reticulum</keyword>
<keyword id="KW-0325">Glycoprotein</keyword>
<keyword id="KW-0378">Hydrolase</keyword>
<keyword id="KW-0479">Metal-binding</keyword>
<keyword id="KW-1267">Proteomics identification</keyword>
<keyword id="KW-1185">Reference proteome</keyword>
<keyword id="KW-0732">Signal</keyword>
<keyword id="KW-0834">Unfolded protein response</keyword>
<proteinExistence type="evidence at protein level"/>
<evidence type="ECO:0000250" key="1"/>
<evidence type="ECO:0000250" key="2">
    <source>
        <dbReference type="UniProtKB" id="P31723"/>
    </source>
</evidence>
<evidence type="ECO:0000250" key="3">
    <source>
        <dbReference type="UniProtKB" id="P32906"/>
    </source>
</evidence>
<evidence type="ECO:0000250" key="4">
    <source>
        <dbReference type="UniProtKB" id="P45700"/>
    </source>
</evidence>
<evidence type="ECO:0000255" key="5"/>
<evidence type="ECO:0000255" key="6">
    <source>
        <dbReference type="PROSITE-ProRule" id="PRU10138"/>
    </source>
</evidence>
<evidence type="ECO:0000256" key="7">
    <source>
        <dbReference type="SAM" id="MobiDB-lite"/>
    </source>
</evidence>
<evidence type="ECO:0000269" key="8">
    <source>
    </source>
</evidence>
<evidence type="ECO:0000269" key="9">
    <source>
    </source>
</evidence>
<evidence type="ECO:0000269" key="10">
    <source>
    </source>
</evidence>
<evidence type="ECO:0000269" key="11">
    <source>
    </source>
</evidence>
<evidence type="ECO:0000303" key="12">
    <source>
    </source>
</evidence>
<evidence type="ECO:0000305" key="13"/>
<sequence length="932" mass="104664">MSEAGGRGCGSPVPQRARWRLVAATAAFCLVSATSVWTAGAEPMSREEKQKLGNQVLEMFDHAYGNYMEHAYPADELMPLTCRGRVRGQEPSRGDVDDALGKFSLTLIDSLDTLVVLNKTKEFEDAVRKVLRDVNLDNDVVVSVFETNIRVLGGLLGGHSLAIMLKEKGEYMQWYNDELLQMAKQLGYKLLPAFNTTSGLPYPRINLKFGIRKPEARTGTETDTCTACAGTLILEFAALSRFTGATIFEEYARKALDFLWEKRQRSSNLVGVTINIHTGDWVRKDSGVGAGIDSYYEYLLKAYVLLGDDSFLERFNTHYDAIMRYISQPPLLLDVHIHKPMLNARTWMDALLAFFPGLQVLKGDIRPAIETHEMLYQVIKKHNFLPEAFTTDFRVHWAQHPLRPEFAESTYFLYKATGDPYYLEVGKTLIENLNKYARVPCGFAAMKDVRTGSHEDRMDSFFLAEMFKYLYLLFADKEDIIFDIEDYIFTTEAHLLPLWLSTTNQSISKKNTTSEYTELDDSNFDWTCPNTQILFPNDPLYAQSIREPLKNVVDKSCPRGIIRVEESFRSGAKPPLRARDFMATNPEHLEILKKMGVSLIHLKDGRVQLVQHAIQAASSIDAEDGLRFMQEMIELSSQQQKEQQLPPRAVQIVSHPFFGRVVLTAGPAQFGLDLSKHKETRGFVASSKPSNGCSELTNPEAVMGKIALIQRGQCMFAEKARNIQNAGAIGGIVIDDNEGSSSDTAPLFQMAGDGKDTDDIKIPMLFLFSKEGSIILDAIREYEEVEVLLSDKAKDRDPEMENEEQPSSENDSQNQSGEQISSSSQEVDLVDQESSEENSLNSHPESLSLADMDNAASISPSEQTSNPTENHETTNLNGECTDLDNQLQEQSETEEDSNPNVSWGKKVQPIDSILADWNEDIEAFEMMEKDEL</sequence>
<name>EDEM3_HUMAN</name>
<feature type="signal peptide" evidence="5">
    <location>
        <begin position="1"/>
        <end position="41"/>
    </location>
</feature>
<feature type="chain" id="PRO_0000210323" description="ER degradation-enhancing alpha-mannosidase-like protein 3">
    <location>
        <begin position="42"/>
        <end position="932"/>
    </location>
</feature>
<feature type="domain" description="PA">
    <location>
        <begin position="674"/>
        <end position="779"/>
    </location>
</feature>
<feature type="region of interest" description="Disordered" evidence="7">
    <location>
        <begin position="790"/>
        <end position="908"/>
    </location>
</feature>
<feature type="short sequence motif" description="Prevents secretion from ER" evidence="6">
    <location>
        <begin position="929"/>
        <end position="932"/>
    </location>
</feature>
<feature type="compositionally biased region" description="Basic and acidic residues" evidence="7">
    <location>
        <begin position="790"/>
        <end position="799"/>
    </location>
</feature>
<feature type="compositionally biased region" description="Low complexity" evidence="7">
    <location>
        <begin position="812"/>
        <end position="825"/>
    </location>
</feature>
<feature type="compositionally biased region" description="Polar residues" evidence="7">
    <location>
        <begin position="856"/>
        <end position="890"/>
    </location>
</feature>
<feature type="active site" description="Proton donor" evidence="1">
    <location>
        <position position="146"/>
    </location>
</feature>
<feature type="active site" evidence="1">
    <location>
        <position position="293"/>
    </location>
</feature>
<feature type="active site" description="Proton donor" evidence="2">
    <location>
        <position position="387"/>
    </location>
</feature>
<feature type="active site" evidence="1">
    <location>
        <position position="405"/>
    </location>
</feature>
<feature type="binding site" evidence="3">
    <location>
        <position position="491"/>
    </location>
    <ligand>
        <name>Ca(2+)</name>
        <dbReference type="ChEBI" id="CHEBI:29108"/>
    </ligand>
</feature>
<feature type="glycosylation site" description="N-linked (GlcNAc...) asparagine" evidence="5">
    <location>
        <position position="118"/>
    </location>
</feature>
<feature type="glycosylation site" description="N-linked (GlcNAc...) asparagine" evidence="9">
    <location>
        <position position="195"/>
    </location>
</feature>
<feature type="glycosylation site" description="N-linked (GlcNAc...) asparagine" evidence="5">
    <location>
        <position position="504"/>
    </location>
</feature>
<feature type="glycosylation site" description="N-linked (GlcNAc...) asparagine" evidence="5">
    <location>
        <position position="511"/>
    </location>
</feature>
<feature type="glycosylation site" description="N-linked (GlcNAc...) asparagine" evidence="5">
    <location>
        <position position="810"/>
    </location>
</feature>
<feature type="glycosylation site" description="N-linked (GlcNAc...) asparagine" evidence="5">
    <location>
        <position position="814"/>
    </location>
</feature>
<feature type="glycosylation site" description="N-linked (GlcNAc...) asparagine" evidence="5">
    <location>
        <position position="900"/>
    </location>
</feature>
<feature type="splice variant" id="VSP_056375" description="In isoform 2." evidence="12">
    <location>
        <begin position="1"/>
        <end position="43"/>
    </location>
</feature>
<feature type="splice variant" id="VSP_056376" description="In isoform 2." evidence="12">
    <original>RD</original>
    <variation>RAAILKGKMIPSYIINSN</variation>
    <location>
        <begin position="796"/>
        <end position="797"/>
    </location>
</feature>
<feature type="sequence variant" id="VAR_086113" description="In CDG2V; uncertain significance; dbSNP:rs777353823." evidence="11">
    <original>D</original>
    <variation>G</variation>
    <location>
        <position position="61"/>
    </location>
</feature>
<feature type="sequence variant" id="VAR_086114" description="In CDG2V; uncertain significance." evidence="11">
    <location>
        <begin position="314"/>
        <end position="932"/>
    </location>
</feature>
<feature type="sequence variant" id="VAR_086115" description="In CDG2V; uncertain significance; dbSNP:rs2102081233." evidence="11">
    <original>D</original>
    <variation>N</variation>
    <location>
        <position position="456"/>
    </location>
</feature>
<feature type="sequence variant" id="VAR_086116" description="In CDG2V; uncertain significance; dbSNP:rs902837579." evidence="11">
    <location>
        <begin position="469"/>
        <end position="932"/>
    </location>
</feature>
<feature type="sequence variant" id="VAR_059306" description="In dbSNP:rs9425343." evidence="8">
    <original>I</original>
    <variation>S</variation>
    <location>
        <position position="820"/>
    </location>
</feature>
<feature type="sequence conflict" description="In Ref. 1; BAG37573." evidence="13" ref="1">
    <original>I</original>
    <variation>T</variation>
    <location>
        <position position="276"/>
    </location>
</feature>
<feature type="sequence conflict" description="In Ref. 4; AAI05587." evidence="13" ref="4">
    <original>HY</original>
    <variation>VS</variation>
    <location>
        <begin position="318"/>
        <end position="319"/>
    </location>
</feature>
<organism>
    <name type="scientific">Homo sapiens</name>
    <name type="common">Human</name>
    <dbReference type="NCBI Taxonomy" id="9606"/>
    <lineage>
        <taxon>Eukaryota</taxon>
        <taxon>Metazoa</taxon>
        <taxon>Chordata</taxon>
        <taxon>Craniata</taxon>
        <taxon>Vertebrata</taxon>
        <taxon>Euteleostomi</taxon>
        <taxon>Mammalia</taxon>
        <taxon>Eutheria</taxon>
        <taxon>Euarchontoglires</taxon>
        <taxon>Primates</taxon>
        <taxon>Haplorrhini</taxon>
        <taxon>Catarrhini</taxon>
        <taxon>Hominidae</taxon>
        <taxon>Homo</taxon>
    </lineage>
</organism>
<reference key="1">
    <citation type="journal article" date="2004" name="Nat. Genet.">
        <title>Complete sequencing and characterization of 21,243 full-length human cDNAs.</title>
        <authorList>
            <person name="Ota T."/>
            <person name="Suzuki Y."/>
            <person name="Nishikawa T."/>
            <person name="Otsuki T."/>
            <person name="Sugiyama T."/>
            <person name="Irie R."/>
            <person name="Wakamatsu A."/>
            <person name="Hayashi K."/>
            <person name="Sato H."/>
            <person name="Nagai K."/>
            <person name="Kimura K."/>
            <person name="Makita H."/>
            <person name="Sekine M."/>
            <person name="Obayashi M."/>
            <person name="Nishi T."/>
            <person name="Shibahara T."/>
            <person name="Tanaka T."/>
            <person name="Ishii S."/>
            <person name="Yamamoto J."/>
            <person name="Saito K."/>
            <person name="Kawai Y."/>
            <person name="Isono Y."/>
            <person name="Nakamura Y."/>
            <person name="Nagahari K."/>
            <person name="Murakami K."/>
            <person name="Yasuda T."/>
            <person name="Iwayanagi T."/>
            <person name="Wagatsuma M."/>
            <person name="Shiratori A."/>
            <person name="Sudo H."/>
            <person name="Hosoiri T."/>
            <person name="Kaku Y."/>
            <person name="Kodaira H."/>
            <person name="Kondo H."/>
            <person name="Sugawara M."/>
            <person name="Takahashi M."/>
            <person name="Kanda K."/>
            <person name="Yokoi T."/>
            <person name="Furuya T."/>
            <person name="Kikkawa E."/>
            <person name="Omura Y."/>
            <person name="Abe K."/>
            <person name="Kamihara K."/>
            <person name="Katsuta N."/>
            <person name="Sato K."/>
            <person name="Tanikawa M."/>
            <person name="Yamazaki M."/>
            <person name="Ninomiya K."/>
            <person name="Ishibashi T."/>
            <person name="Yamashita H."/>
            <person name="Murakawa K."/>
            <person name="Fujimori K."/>
            <person name="Tanai H."/>
            <person name="Kimata M."/>
            <person name="Watanabe M."/>
            <person name="Hiraoka S."/>
            <person name="Chiba Y."/>
            <person name="Ishida S."/>
            <person name="Ono Y."/>
            <person name="Takiguchi S."/>
            <person name="Watanabe S."/>
            <person name="Yosida M."/>
            <person name="Hotuta T."/>
            <person name="Kusano J."/>
            <person name="Kanehori K."/>
            <person name="Takahashi-Fujii A."/>
            <person name="Hara H."/>
            <person name="Tanase T.-O."/>
            <person name="Nomura Y."/>
            <person name="Togiya S."/>
            <person name="Komai F."/>
            <person name="Hara R."/>
            <person name="Takeuchi K."/>
            <person name="Arita M."/>
            <person name="Imose N."/>
            <person name="Musashino K."/>
            <person name="Yuuki H."/>
            <person name="Oshima A."/>
            <person name="Sasaki N."/>
            <person name="Aotsuka S."/>
            <person name="Yoshikawa Y."/>
            <person name="Matsunawa H."/>
            <person name="Ichihara T."/>
            <person name="Shiohata N."/>
            <person name="Sano S."/>
            <person name="Moriya S."/>
            <person name="Momiyama H."/>
            <person name="Satoh N."/>
            <person name="Takami S."/>
            <person name="Terashima Y."/>
            <person name="Suzuki O."/>
            <person name="Nakagawa S."/>
            <person name="Senoh A."/>
            <person name="Mizoguchi H."/>
            <person name="Goto Y."/>
            <person name="Shimizu F."/>
            <person name="Wakebe H."/>
            <person name="Hishigaki H."/>
            <person name="Watanabe T."/>
            <person name="Sugiyama A."/>
            <person name="Takemoto M."/>
            <person name="Kawakami B."/>
            <person name="Yamazaki M."/>
            <person name="Watanabe K."/>
            <person name="Kumagai A."/>
            <person name="Itakura S."/>
            <person name="Fukuzumi Y."/>
            <person name="Fujimori Y."/>
            <person name="Komiyama M."/>
            <person name="Tashiro H."/>
            <person name="Tanigami A."/>
            <person name="Fujiwara T."/>
            <person name="Ono T."/>
            <person name="Yamada K."/>
            <person name="Fujii Y."/>
            <person name="Ozaki K."/>
            <person name="Hirao M."/>
            <person name="Ohmori Y."/>
            <person name="Kawabata A."/>
            <person name="Hikiji T."/>
            <person name="Kobatake N."/>
            <person name="Inagaki H."/>
            <person name="Ikema Y."/>
            <person name="Okamoto S."/>
            <person name="Okitani R."/>
            <person name="Kawakami T."/>
            <person name="Noguchi S."/>
            <person name="Itoh T."/>
            <person name="Shigeta K."/>
            <person name="Senba T."/>
            <person name="Matsumura K."/>
            <person name="Nakajima Y."/>
            <person name="Mizuno T."/>
            <person name="Morinaga M."/>
            <person name="Sasaki M."/>
            <person name="Togashi T."/>
            <person name="Oyama M."/>
            <person name="Hata H."/>
            <person name="Watanabe M."/>
            <person name="Komatsu T."/>
            <person name="Mizushima-Sugano J."/>
            <person name="Satoh T."/>
            <person name="Shirai Y."/>
            <person name="Takahashi Y."/>
            <person name="Nakagawa K."/>
            <person name="Okumura K."/>
            <person name="Nagase T."/>
            <person name="Nomura N."/>
            <person name="Kikuchi H."/>
            <person name="Masuho Y."/>
            <person name="Yamashita R."/>
            <person name="Nakai K."/>
            <person name="Yada T."/>
            <person name="Nakamura Y."/>
            <person name="Ohara O."/>
            <person name="Isogai T."/>
            <person name="Sugano S."/>
        </authorList>
    </citation>
    <scope>NUCLEOTIDE SEQUENCE [LARGE SCALE MRNA] (ISOFORM 1)</scope>
    <source>
        <tissue>Placenta</tissue>
    </source>
</reference>
<reference key="2">
    <citation type="journal article" date="2006" name="Nature">
        <title>The DNA sequence and biological annotation of human chromosome 1.</title>
        <authorList>
            <person name="Gregory S.G."/>
            <person name="Barlow K.F."/>
            <person name="McLay K.E."/>
            <person name="Kaul R."/>
            <person name="Swarbreck D."/>
            <person name="Dunham A."/>
            <person name="Scott C.E."/>
            <person name="Howe K.L."/>
            <person name="Woodfine K."/>
            <person name="Spencer C.C.A."/>
            <person name="Jones M.C."/>
            <person name="Gillson C."/>
            <person name="Searle S."/>
            <person name="Zhou Y."/>
            <person name="Kokocinski F."/>
            <person name="McDonald L."/>
            <person name="Evans R."/>
            <person name="Phillips K."/>
            <person name="Atkinson A."/>
            <person name="Cooper R."/>
            <person name="Jones C."/>
            <person name="Hall R.E."/>
            <person name="Andrews T.D."/>
            <person name="Lloyd C."/>
            <person name="Ainscough R."/>
            <person name="Almeida J.P."/>
            <person name="Ambrose K.D."/>
            <person name="Anderson F."/>
            <person name="Andrew R.W."/>
            <person name="Ashwell R.I.S."/>
            <person name="Aubin K."/>
            <person name="Babbage A.K."/>
            <person name="Bagguley C.L."/>
            <person name="Bailey J."/>
            <person name="Beasley H."/>
            <person name="Bethel G."/>
            <person name="Bird C.P."/>
            <person name="Bray-Allen S."/>
            <person name="Brown J.Y."/>
            <person name="Brown A.J."/>
            <person name="Buckley D."/>
            <person name="Burton J."/>
            <person name="Bye J."/>
            <person name="Carder C."/>
            <person name="Chapman J.C."/>
            <person name="Clark S.Y."/>
            <person name="Clarke G."/>
            <person name="Clee C."/>
            <person name="Cobley V."/>
            <person name="Collier R.E."/>
            <person name="Corby N."/>
            <person name="Coville G.J."/>
            <person name="Davies J."/>
            <person name="Deadman R."/>
            <person name="Dunn M."/>
            <person name="Earthrowl M."/>
            <person name="Ellington A.G."/>
            <person name="Errington H."/>
            <person name="Frankish A."/>
            <person name="Frankland J."/>
            <person name="French L."/>
            <person name="Garner P."/>
            <person name="Garnett J."/>
            <person name="Gay L."/>
            <person name="Ghori M.R.J."/>
            <person name="Gibson R."/>
            <person name="Gilby L.M."/>
            <person name="Gillett W."/>
            <person name="Glithero R.J."/>
            <person name="Grafham D.V."/>
            <person name="Griffiths C."/>
            <person name="Griffiths-Jones S."/>
            <person name="Grocock R."/>
            <person name="Hammond S."/>
            <person name="Harrison E.S.I."/>
            <person name="Hart E."/>
            <person name="Haugen E."/>
            <person name="Heath P.D."/>
            <person name="Holmes S."/>
            <person name="Holt K."/>
            <person name="Howden P.J."/>
            <person name="Hunt A.R."/>
            <person name="Hunt S.E."/>
            <person name="Hunter G."/>
            <person name="Isherwood J."/>
            <person name="James R."/>
            <person name="Johnson C."/>
            <person name="Johnson D."/>
            <person name="Joy A."/>
            <person name="Kay M."/>
            <person name="Kershaw J.K."/>
            <person name="Kibukawa M."/>
            <person name="Kimberley A.M."/>
            <person name="King A."/>
            <person name="Knights A.J."/>
            <person name="Lad H."/>
            <person name="Laird G."/>
            <person name="Lawlor S."/>
            <person name="Leongamornlert D.A."/>
            <person name="Lloyd D.M."/>
            <person name="Loveland J."/>
            <person name="Lovell J."/>
            <person name="Lush M.J."/>
            <person name="Lyne R."/>
            <person name="Martin S."/>
            <person name="Mashreghi-Mohammadi M."/>
            <person name="Matthews L."/>
            <person name="Matthews N.S.W."/>
            <person name="McLaren S."/>
            <person name="Milne S."/>
            <person name="Mistry S."/>
            <person name="Moore M.J.F."/>
            <person name="Nickerson T."/>
            <person name="O'Dell C.N."/>
            <person name="Oliver K."/>
            <person name="Palmeiri A."/>
            <person name="Palmer S.A."/>
            <person name="Parker A."/>
            <person name="Patel D."/>
            <person name="Pearce A.V."/>
            <person name="Peck A.I."/>
            <person name="Pelan S."/>
            <person name="Phelps K."/>
            <person name="Phillimore B.J."/>
            <person name="Plumb R."/>
            <person name="Rajan J."/>
            <person name="Raymond C."/>
            <person name="Rouse G."/>
            <person name="Saenphimmachak C."/>
            <person name="Sehra H.K."/>
            <person name="Sheridan E."/>
            <person name="Shownkeen R."/>
            <person name="Sims S."/>
            <person name="Skuce C.D."/>
            <person name="Smith M."/>
            <person name="Steward C."/>
            <person name="Subramanian S."/>
            <person name="Sycamore N."/>
            <person name="Tracey A."/>
            <person name="Tromans A."/>
            <person name="Van Helmond Z."/>
            <person name="Wall M."/>
            <person name="Wallis J.M."/>
            <person name="White S."/>
            <person name="Whitehead S.L."/>
            <person name="Wilkinson J.E."/>
            <person name="Willey D.L."/>
            <person name="Williams H."/>
            <person name="Wilming L."/>
            <person name="Wray P.W."/>
            <person name="Wu Z."/>
            <person name="Coulson A."/>
            <person name="Vaudin M."/>
            <person name="Sulston J.E."/>
            <person name="Durbin R.M."/>
            <person name="Hubbard T."/>
            <person name="Wooster R."/>
            <person name="Dunham I."/>
            <person name="Carter N.P."/>
            <person name="McVean G."/>
            <person name="Ross M.T."/>
            <person name="Harrow J."/>
            <person name="Olson M.V."/>
            <person name="Beck S."/>
            <person name="Rogers J."/>
            <person name="Bentley D.R."/>
        </authorList>
    </citation>
    <scope>NUCLEOTIDE SEQUENCE [LARGE SCALE GENOMIC DNA]</scope>
</reference>
<reference key="3">
    <citation type="journal article" date="2004" name="Genome Res.">
        <title>The status, quality, and expansion of the NIH full-length cDNA project: the Mammalian Gene Collection (MGC).</title>
        <authorList>
            <consortium name="The MGC Project Team"/>
        </authorList>
    </citation>
    <scope>NUCLEOTIDE SEQUENCE [LARGE SCALE MRNA] (ISOFORM 2)</scope>
    <scope>NUCLEOTIDE SEQUENCE [LARGE SCALE MRNA] OF 78-319 AND 853-932 (ISOFORM 1)</scope>
    <source>
        <tissue>Brain</tissue>
        <tissue>Lung</tissue>
    </source>
</reference>
<reference key="4">
    <citation type="journal article" date="2001" name="Genomics">
        <title>Cloning and characterization of 13 novel transcripts and the human RGS8 gene from the 1q25 region encompassing the hereditary prostate cancer (HPC1) locus.</title>
        <authorList>
            <person name="Sood R."/>
            <person name="Bonner T.I."/>
            <person name="Malakowska I."/>
            <person name="Stephan D.A."/>
            <person name="Robbins C.M."/>
            <person name="Connors T.D."/>
            <person name="Morgenbesser S.D."/>
            <person name="Su K."/>
            <person name="Faruque M.U."/>
            <person name="Pinkett H."/>
            <person name="Graham C."/>
            <person name="Baxevanis A.D."/>
            <person name="Klinger K.W."/>
            <person name="Landes G.M."/>
            <person name="Trent J.M."/>
            <person name="Carpten J.D."/>
        </authorList>
    </citation>
    <scope>NUCLEOTIDE SEQUENCE [MRNA] OF 27-932 (ISOFORM 1)</scope>
</reference>
<reference key="5">
    <citation type="journal article" date="2007" name="BMC Genomics">
        <title>The full-ORF clone resource of the German cDNA consortium.</title>
        <authorList>
            <person name="Bechtel S."/>
            <person name="Rosenfelder H."/>
            <person name="Duda A."/>
            <person name="Schmidt C.P."/>
            <person name="Ernst U."/>
            <person name="Wellenreuther R."/>
            <person name="Mehrle A."/>
            <person name="Schuster C."/>
            <person name="Bahr A."/>
            <person name="Bloecker H."/>
            <person name="Heubner D."/>
            <person name="Hoerlein A."/>
            <person name="Michel G."/>
            <person name="Wedler H."/>
            <person name="Koehrer K."/>
            <person name="Ottenwaelder B."/>
            <person name="Poustka A."/>
            <person name="Wiemann S."/>
            <person name="Schupp I."/>
        </authorList>
    </citation>
    <scope>NUCLEOTIDE SEQUENCE [LARGE SCALE MRNA] OF 553-932 (ISOFORM 1)</scope>
    <scope>VARIANT SER-820</scope>
    <source>
        <tissue>Testis</tissue>
    </source>
</reference>
<reference key="6">
    <citation type="journal article" date="2009" name="J. Proteome Res.">
        <title>Glycoproteomics analysis of human liver tissue by combination of multiple enzyme digestion and hydrazide chemistry.</title>
        <authorList>
            <person name="Chen R."/>
            <person name="Jiang X."/>
            <person name="Sun D."/>
            <person name="Han G."/>
            <person name="Wang F."/>
            <person name="Ye M."/>
            <person name="Wang L."/>
            <person name="Zou H."/>
        </authorList>
    </citation>
    <scope>GLYCOSYLATION [LARGE SCALE ANALYSIS] AT ASN-195</scope>
    <source>
        <tissue>Liver</tissue>
    </source>
</reference>
<reference key="7">
    <citation type="journal article" date="2014" name="J. Cell Biol.">
        <title>EDEM2 initiates mammalian glycoprotein ERAD by catalyzing the first mannose trimming step.</title>
        <authorList>
            <person name="Ninagawa S."/>
            <person name="Okada T."/>
            <person name="Sumitomo Y."/>
            <person name="Kamiya Y."/>
            <person name="Kato K."/>
            <person name="Horimoto S."/>
            <person name="Ishikawa T."/>
            <person name="Takeda S."/>
            <person name="Sakuma T."/>
            <person name="Yamamoto T."/>
            <person name="Mori K."/>
        </authorList>
    </citation>
    <scope>FUNCTION</scope>
</reference>
<reference key="8">
    <citation type="journal article" date="2014" name="J. Proteomics">
        <title>An enzyme assisted RP-RPLC approach for in-depth analysis of human liver phosphoproteome.</title>
        <authorList>
            <person name="Bian Y."/>
            <person name="Song C."/>
            <person name="Cheng K."/>
            <person name="Dong M."/>
            <person name="Wang F."/>
            <person name="Huang J."/>
            <person name="Sun D."/>
            <person name="Wang L."/>
            <person name="Ye M."/>
            <person name="Zou H."/>
        </authorList>
    </citation>
    <scope>IDENTIFICATION BY MASS SPECTROMETRY [LARGE SCALE ANALYSIS]</scope>
    <source>
        <tissue>Liver</tissue>
    </source>
</reference>
<reference key="9">
    <citation type="journal article" date="2015" name="Proteomics">
        <title>N-terminome analysis of the human mitochondrial proteome.</title>
        <authorList>
            <person name="Vaca Jacome A.S."/>
            <person name="Rabilloud T."/>
            <person name="Schaeffer-Reiss C."/>
            <person name="Rompais M."/>
            <person name="Ayoub D."/>
            <person name="Lane L."/>
            <person name="Bairoch A."/>
            <person name="Van Dorsselaer A."/>
            <person name="Carapito C."/>
        </authorList>
    </citation>
    <scope>IDENTIFICATION BY MASS SPECTROMETRY [LARGE SCALE ANALYSIS]</scope>
</reference>
<reference key="10">
    <citation type="journal article" date="2021" name="Am. J. Hum. Genet.">
        <title>Bi-allelic variants in the ER quality-control mannosidase gene EDEM3 cause a congenital disorder of glycosylation.</title>
        <authorList>
            <person name="Polla D.L."/>
            <person name="Edmondson A.C."/>
            <person name="Duvet S."/>
            <person name="March M.E."/>
            <person name="Sousa A.B."/>
            <person name="Lehman A."/>
            <person name="Niyazov D."/>
            <person name="van Dijk F."/>
            <person name="Demirdas S."/>
            <person name="van Slegtenhorst M.A."/>
            <person name="Kievit A.J.A."/>
            <person name="Schulz C."/>
            <person name="Armstrong L."/>
            <person name="Bi X."/>
            <person name="Rader D.J."/>
            <person name="Izumi K."/>
            <person name="Zackai E.H."/>
            <person name="de Franco E."/>
            <person name="Jorge P."/>
            <person name="Huffels S.C."/>
            <person name="Hommersom M."/>
            <person name="Ellard S."/>
            <person name="Lefeber D.J."/>
            <person name="Santani A."/>
            <person name="Hand N.J."/>
            <person name="van Bokhoven H."/>
            <person name="He M."/>
            <person name="de Brouwer A.P.M."/>
        </authorList>
    </citation>
    <scope>INVOLVEMENT IN CDG2V</scope>
    <scope>FUNCTION</scope>
    <scope>VARIANTS CDG2V GLY-61; 314-ARG--LEU-932 DEL; ASN-456 AND 469-TYR--LEU-932 DEL</scope>
</reference>
<dbReference type="EC" id="3.2.1.113" evidence="3"/>
<dbReference type="EMBL" id="AK315118">
    <property type="protein sequence ID" value="BAG37573.1"/>
    <property type="status" value="ALT_INIT"/>
    <property type="molecule type" value="mRNA"/>
</dbReference>
<dbReference type="EMBL" id="AL096819">
    <property type="status" value="NOT_ANNOTATED_CDS"/>
    <property type="molecule type" value="Genomic_DNA"/>
</dbReference>
<dbReference type="EMBL" id="BC016464">
    <property type="protein sequence ID" value="AAH16464.2"/>
    <property type="molecule type" value="mRNA"/>
</dbReference>
<dbReference type="EMBL" id="BC105586">
    <property type="protein sequence ID" value="AAI05587.1"/>
    <property type="molecule type" value="mRNA"/>
</dbReference>
<dbReference type="EMBL" id="BC144149">
    <property type="protein sequence ID" value="AAI44150.1"/>
    <property type="molecule type" value="mRNA"/>
</dbReference>
<dbReference type="EMBL" id="AF288393">
    <property type="protein sequence ID" value="AAG60613.1"/>
    <property type="status" value="ALT_INIT"/>
    <property type="molecule type" value="mRNA"/>
</dbReference>
<dbReference type="EMBL" id="AL117441">
    <property type="protein sequence ID" value="CAB55926.1"/>
    <property type="molecule type" value="mRNA"/>
</dbReference>
<dbReference type="CCDS" id="CCDS1363.2">
    <molecule id="Q9BZQ6-1"/>
</dbReference>
<dbReference type="PIR" id="T17236">
    <property type="entry name" value="T17236"/>
</dbReference>
<dbReference type="RefSeq" id="NP_001306889.1">
    <property type="nucleotide sequence ID" value="NM_001319960.1"/>
</dbReference>
<dbReference type="RefSeq" id="NP_079467.3">
    <molecule id="Q9BZQ6-1"/>
    <property type="nucleotide sequence ID" value="NM_025191.3"/>
</dbReference>
<dbReference type="SMR" id="Q9BZQ6"/>
<dbReference type="BioGRID" id="123207">
    <property type="interactions" value="174"/>
</dbReference>
<dbReference type="FunCoup" id="Q9BZQ6">
    <property type="interactions" value="2472"/>
</dbReference>
<dbReference type="IntAct" id="Q9BZQ6">
    <property type="interactions" value="58"/>
</dbReference>
<dbReference type="MINT" id="Q9BZQ6"/>
<dbReference type="STRING" id="9606.ENSP00000318147"/>
<dbReference type="CAZy" id="GH47">
    <property type="family name" value="Glycoside Hydrolase Family 47"/>
</dbReference>
<dbReference type="GlyConnect" id="1220">
    <property type="glycosylation" value="4 N-Linked glycans (1 site)"/>
</dbReference>
<dbReference type="GlyCosmos" id="Q9BZQ6">
    <property type="glycosylation" value="7 sites, 4 glycans"/>
</dbReference>
<dbReference type="GlyGen" id="Q9BZQ6">
    <property type="glycosylation" value="9 sites, 10 N-linked glycans (3 sites), 1 O-linked glycan (1 site)"/>
</dbReference>
<dbReference type="iPTMnet" id="Q9BZQ6"/>
<dbReference type="PhosphoSitePlus" id="Q9BZQ6"/>
<dbReference type="SwissPalm" id="Q9BZQ6"/>
<dbReference type="BioMuta" id="EDEM3"/>
<dbReference type="DMDM" id="166897965"/>
<dbReference type="jPOST" id="Q9BZQ6"/>
<dbReference type="MassIVE" id="Q9BZQ6"/>
<dbReference type="PaxDb" id="9606-ENSP00000318147"/>
<dbReference type="PeptideAtlas" id="Q9BZQ6"/>
<dbReference type="ProteomicsDB" id="7240"/>
<dbReference type="ProteomicsDB" id="79892">
    <molecule id="Q9BZQ6-1"/>
</dbReference>
<dbReference type="Pumba" id="Q9BZQ6"/>
<dbReference type="Antibodypedia" id="20607">
    <property type="antibodies" value="125 antibodies from 25 providers"/>
</dbReference>
<dbReference type="DNASU" id="80267"/>
<dbReference type="Ensembl" id="ENST00000318130.13">
    <molecule id="Q9BZQ6-1"/>
    <property type="protein sequence ID" value="ENSP00000318147.7"/>
    <property type="gene ID" value="ENSG00000116406.20"/>
</dbReference>
<dbReference type="GeneID" id="80267"/>
<dbReference type="KEGG" id="hsa:80267"/>
<dbReference type="MANE-Select" id="ENST00000318130.13">
    <property type="protein sequence ID" value="ENSP00000318147.7"/>
    <property type="RefSeq nucleotide sequence ID" value="NM_025191.4"/>
    <property type="RefSeq protein sequence ID" value="NP_079467.3"/>
</dbReference>
<dbReference type="UCSC" id="uc010pok.3">
    <molecule id="Q9BZQ6-1"/>
    <property type="organism name" value="human"/>
</dbReference>
<dbReference type="AGR" id="HGNC:16787"/>
<dbReference type="CTD" id="80267"/>
<dbReference type="DisGeNET" id="80267"/>
<dbReference type="GeneCards" id="EDEM3"/>
<dbReference type="HGNC" id="HGNC:16787">
    <property type="gene designation" value="EDEM3"/>
</dbReference>
<dbReference type="HPA" id="ENSG00000116406">
    <property type="expression patterns" value="Low tissue specificity"/>
</dbReference>
<dbReference type="MalaCards" id="EDEM3"/>
<dbReference type="MIM" id="610214">
    <property type="type" value="gene"/>
</dbReference>
<dbReference type="MIM" id="619493">
    <property type="type" value="phenotype"/>
</dbReference>
<dbReference type="neXtProt" id="NX_Q9BZQ6"/>
<dbReference type="OpenTargets" id="ENSG00000116406"/>
<dbReference type="Orphanet" id="528084">
    <property type="disease" value="Non-specific syndromic intellectual disability"/>
</dbReference>
<dbReference type="PharmGKB" id="PA38186"/>
<dbReference type="VEuPathDB" id="HostDB:ENSG00000116406"/>
<dbReference type="eggNOG" id="KOG2430">
    <property type="taxonomic scope" value="Eukaryota"/>
</dbReference>
<dbReference type="GeneTree" id="ENSGT00940000159391"/>
<dbReference type="HOGENOM" id="CLU_003818_4_1_1"/>
<dbReference type="InParanoid" id="Q9BZQ6"/>
<dbReference type="OMA" id="RRWDRRE"/>
<dbReference type="OrthoDB" id="8118055at2759"/>
<dbReference type="PAN-GO" id="Q9BZQ6">
    <property type="GO annotations" value="4 GO annotations based on evolutionary models"/>
</dbReference>
<dbReference type="PhylomeDB" id="Q9BZQ6"/>
<dbReference type="TreeFam" id="TF300807"/>
<dbReference type="PathwayCommons" id="Q9BZQ6"/>
<dbReference type="Reactome" id="R-HSA-901032">
    <property type="pathway name" value="ER Quality Control Compartment (ERQC)"/>
</dbReference>
<dbReference type="SignaLink" id="Q9BZQ6"/>
<dbReference type="UniPathway" id="UPA00378"/>
<dbReference type="BioGRID-ORCS" id="80267">
    <property type="hits" value="15 hits in 1169 CRISPR screens"/>
</dbReference>
<dbReference type="ChiTaRS" id="EDEM3">
    <property type="organism name" value="human"/>
</dbReference>
<dbReference type="GeneWiki" id="EDEM3"/>
<dbReference type="GenomeRNAi" id="80267"/>
<dbReference type="Pharos" id="Q9BZQ6">
    <property type="development level" value="Tbio"/>
</dbReference>
<dbReference type="PRO" id="PR:Q9BZQ6"/>
<dbReference type="Proteomes" id="UP000005640">
    <property type="component" value="Chromosome 1"/>
</dbReference>
<dbReference type="RNAct" id="Q9BZQ6">
    <property type="molecule type" value="protein"/>
</dbReference>
<dbReference type="Bgee" id="ENSG00000116406">
    <property type="expression patterns" value="Expressed in pylorus and 196 other cell types or tissues"/>
</dbReference>
<dbReference type="ExpressionAtlas" id="Q9BZQ6">
    <property type="expression patterns" value="baseline and differential"/>
</dbReference>
<dbReference type="GO" id="GO:0005783">
    <property type="term" value="C:endoplasmic reticulum"/>
    <property type="evidence" value="ECO:0000318"/>
    <property type="project" value="GO_Central"/>
</dbReference>
<dbReference type="GO" id="GO:0005788">
    <property type="term" value="C:endoplasmic reticulum lumen"/>
    <property type="evidence" value="ECO:0007669"/>
    <property type="project" value="UniProtKB-SubCell"/>
</dbReference>
<dbReference type="GO" id="GO:0044322">
    <property type="term" value="C:endoplasmic reticulum quality control compartment"/>
    <property type="evidence" value="ECO:0000304"/>
    <property type="project" value="Reactome"/>
</dbReference>
<dbReference type="GO" id="GO:0016020">
    <property type="term" value="C:membrane"/>
    <property type="evidence" value="ECO:0007669"/>
    <property type="project" value="InterPro"/>
</dbReference>
<dbReference type="GO" id="GO:0005509">
    <property type="term" value="F:calcium ion binding"/>
    <property type="evidence" value="ECO:0007669"/>
    <property type="project" value="InterPro"/>
</dbReference>
<dbReference type="GO" id="GO:0004571">
    <property type="term" value="F:mannosyl-oligosaccharide 1,2-alpha-mannosidase activity"/>
    <property type="evidence" value="ECO:0000315"/>
    <property type="project" value="ParkinsonsUK-UCL"/>
</dbReference>
<dbReference type="GO" id="GO:0005975">
    <property type="term" value="P:carbohydrate metabolic process"/>
    <property type="evidence" value="ECO:0007669"/>
    <property type="project" value="InterPro"/>
</dbReference>
<dbReference type="GO" id="GO:1904380">
    <property type="term" value="P:endoplasmic reticulum mannose trimming"/>
    <property type="evidence" value="ECO:0007669"/>
    <property type="project" value="InterPro"/>
</dbReference>
<dbReference type="GO" id="GO:0030968">
    <property type="term" value="P:endoplasmic reticulum unfolded protein response"/>
    <property type="evidence" value="ECO:0000318"/>
    <property type="project" value="GO_Central"/>
</dbReference>
<dbReference type="GO" id="GO:0036503">
    <property type="term" value="P:ERAD pathway"/>
    <property type="evidence" value="ECO:0000315"/>
    <property type="project" value="ARUK-UCL"/>
</dbReference>
<dbReference type="GO" id="GO:0006058">
    <property type="term" value="P:mannoprotein catabolic process"/>
    <property type="evidence" value="ECO:0000315"/>
    <property type="project" value="ParkinsonsUK-UCL"/>
</dbReference>
<dbReference type="GO" id="GO:0006486">
    <property type="term" value="P:protein glycosylation"/>
    <property type="evidence" value="ECO:0007669"/>
    <property type="project" value="UniProtKB-UniPathway"/>
</dbReference>
<dbReference type="GO" id="GO:0097466">
    <property type="term" value="P:ubiquitin-dependent glycoprotein ERAD pathway"/>
    <property type="evidence" value="ECO:0000318"/>
    <property type="project" value="GO_Central"/>
</dbReference>
<dbReference type="CDD" id="cd02126">
    <property type="entry name" value="PA_EDEM3_like"/>
    <property type="match status" value="1"/>
</dbReference>
<dbReference type="FunFam" id="1.50.10.10:FF:000008">
    <property type="entry name" value="alpha-1,2-Mannosidase"/>
    <property type="match status" value="1"/>
</dbReference>
<dbReference type="FunFam" id="3.50.30.30:FF:000004">
    <property type="entry name" value="alpha-1,2-Mannosidase"/>
    <property type="match status" value="1"/>
</dbReference>
<dbReference type="Gene3D" id="1.50.10.10">
    <property type="match status" value="1"/>
</dbReference>
<dbReference type="Gene3D" id="3.50.30.30">
    <property type="match status" value="1"/>
</dbReference>
<dbReference type="InterPro" id="IPR012341">
    <property type="entry name" value="6hp_glycosidase-like_sf"/>
</dbReference>
<dbReference type="InterPro" id="IPR044674">
    <property type="entry name" value="EDEM1/2/3"/>
</dbReference>
<dbReference type="InterPro" id="IPR037322">
    <property type="entry name" value="EDEM3_PA"/>
</dbReference>
<dbReference type="InterPro" id="IPR001382">
    <property type="entry name" value="Glyco_hydro_47"/>
</dbReference>
<dbReference type="InterPro" id="IPR046450">
    <property type="entry name" value="PA_dom_sf"/>
</dbReference>
<dbReference type="InterPro" id="IPR003137">
    <property type="entry name" value="PA_domain"/>
</dbReference>
<dbReference type="InterPro" id="IPR036026">
    <property type="entry name" value="Seven-hairpin_glycosidases"/>
</dbReference>
<dbReference type="PANTHER" id="PTHR45679">
    <property type="entry name" value="ER DEGRADATION-ENHANCING ALPHA-MANNOSIDASE-LIKE PROTEIN 2"/>
    <property type="match status" value="1"/>
</dbReference>
<dbReference type="PANTHER" id="PTHR45679:SF2">
    <property type="entry name" value="ER DEGRADATION-ENHANCING ALPHA-MANNOSIDASE-LIKE PROTEIN 3"/>
    <property type="match status" value="1"/>
</dbReference>
<dbReference type="Pfam" id="PF01532">
    <property type="entry name" value="Glyco_hydro_47"/>
    <property type="match status" value="1"/>
</dbReference>
<dbReference type="Pfam" id="PF02225">
    <property type="entry name" value="PA"/>
    <property type="match status" value="1"/>
</dbReference>
<dbReference type="PRINTS" id="PR00747">
    <property type="entry name" value="GLYHDRLASE47"/>
</dbReference>
<dbReference type="SUPFAM" id="SSF52025">
    <property type="entry name" value="PA domain"/>
    <property type="match status" value="1"/>
</dbReference>
<dbReference type="SUPFAM" id="SSF48225">
    <property type="entry name" value="Seven-hairpin glycosidases"/>
    <property type="match status" value="1"/>
</dbReference>
<dbReference type="PROSITE" id="PS00014">
    <property type="entry name" value="ER_TARGET"/>
    <property type="match status" value="1"/>
</dbReference>
<accession>Q9BZQ6</accession>
<accession>B2RCH6</accession>
<accession>B7ZLZ2</accession>
<accession>Q0VGM5</accession>
<accession>Q5TEZ0</accession>
<accession>Q7L2Y5</accession>
<accession>Q9HCW1</accession>
<accession>Q9UFV7</accession>
<gene>
    <name type="primary">EDEM3</name>
    <name type="synonym">C1orf22</name>
</gene>
<comment type="function">
    <text evidence="1 10 11">Involved in endoplasmic reticulum-associated degradation (ERAD). Accelerates the glycoprotein ERAD by proteasomes, by catalyzing mannose trimming from Man8GlcNAc2 to Man7GlcNAc2 in the N-glycans (PubMed:25092655). May also participate in mannose trimming from all glycoproteins and not just misfolded ones targeted to ERAD (PubMed:34143952). May have alpha 1,2-mannosidase activity (By similarity).</text>
</comment>
<comment type="catalytic activity">
    <reaction evidence="3">
        <text>N(4)-(alpha-D-Man-(1-&gt;2)-alpha-D-Man-(1-&gt;2)-alpha-D-Man-(1-&gt;3)-[alpha-D-Man-(1-&gt;2)-alpha-D-Man-(1-&gt;3)-[alpha-D-Man-(1-&gt;2)-alpha-D-Man-(1-&gt;6)]-alpha-D-Man-(1-&gt;6)]-beta-D-Man-(1-&gt;4)-beta-D-GlcNAc-(1-&gt;4)-beta-D-GlcNAc)-L-asparaginyl-[protein] (N-glucan mannose isomer 9A1,2,3B1,2,3) + 4 H2O = N(4)-(alpha-D-Man-(1-&gt;3)-[alpha-D-Man-(1-&gt;3)-[alpha-D-Man-(1-&gt;6)]-alpha-D-Man-(1-&gt;6)]-beta-D-Man-(1-&gt;4)-beta-D-GlcNAc-(1-&gt;4)-beta-D-GlcNAc)-L-asparaginyl-[protein] (N-glucan mannose isomer 5A1,2) + 4 beta-D-mannose</text>
        <dbReference type="Rhea" id="RHEA:56008"/>
        <dbReference type="Rhea" id="RHEA-COMP:14356"/>
        <dbReference type="Rhea" id="RHEA-COMP:14367"/>
        <dbReference type="ChEBI" id="CHEBI:15377"/>
        <dbReference type="ChEBI" id="CHEBI:28563"/>
        <dbReference type="ChEBI" id="CHEBI:59087"/>
        <dbReference type="ChEBI" id="CHEBI:139493"/>
        <dbReference type="EC" id="3.2.1.113"/>
    </reaction>
</comment>
<comment type="catalytic activity">
    <reaction evidence="3">
        <text>N(4)-(alpha-D-Man-(1-&gt;2)-alpha-D-Man-(1-&gt;2)-alpha-D-Man-(1-&gt;3)-[alpha-D-Man-(1-&gt;3)-[alpha-D-Man-(1-&gt;2)-alpha-D-Man-(1-&gt;6)]-alpha-D-Man-(1-&gt;6)]-beta-D-Man-(1-&gt;4)-beta-D-GlcNAc-(1-&gt;4)-beta-D-GlcNAc)-L-asparaginyl-[protein] (N-glucan mannose isomer 8A1,2,3B1,3) + 3 H2O = N(4)-(alpha-D-Man-(1-&gt;3)-[alpha-D-Man-(1-&gt;3)-[alpha-D-Man-(1-&gt;6)]-alpha-D-Man-(1-&gt;6)]-beta-D-Man-(1-&gt;4)-beta-D-GlcNAc-(1-&gt;4)-beta-D-GlcNAc)-L-asparaginyl-[protein] (N-glucan mannose isomer 5A1,2) + 3 beta-D-mannose</text>
        <dbReference type="Rhea" id="RHEA:56028"/>
        <dbReference type="Rhea" id="RHEA-COMP:14358"/>
        <dbReference type="Rhea" id="RHEA-COMP:14367"/>
        <dbReference type="ChEBI" id="CHEBI:15377"/>
        <dbReference type="ChEBI" id="CHEBI:28563"/>
        <dbReference type="ChEBI" id="CHEBI:59087"/>
        <dbReference type="ChEBI" id="CHEBI:60628"/>
        <dbReference type="EC" id="3.2.1.113"/>
    </reaction>
</comment>
<comment type="cofactor">
    <cofactor evidence="4">
        <name>Ca(2+)</name>
        <dbReference type="ChEBI" id="CHEBI:29108"/>
    </cofactor>
</comment>
<comment type="pathway">
    <text evidence="3">Protein modification; protein glycosylation.</text>
</comment>
<comment type="subcellular location">
    <subcellularLocation>
        <location evidence="6">Endoplasmic reticulum lumen</location>
    </subcellularLocation>
</comment>
<comment type="alternative products">
    <event type="alternative splicing"/>
    <isoform>
        <id>Q9BZQ6-1</id>
        <name>1</name>
        <sequence type="displayed"/>
    </isoform>
    <isoform>
        <id>Q9BZQ6-2</id>
        <name>2</name>
        <sequence type="described" ref="VSP_056375 VSP_056376"/>
    </isoform>
</comment>
<comment type="domain">
    <text>Contains a protease-associated domain (PA) of unknown function.</text>
</comment>
<comment type="disease" evidence="11">
    <disease id="DI-06213">
        <name>Congenital disorder of glycosylation 2V</name>
        <acronym>CDG2V</acronym>
        <description>A form of congenital disorder of glycosylation, a genetically heterogeneous group of multisystem disorders caused by a defect in glycoprotein biosynthesis and characterized by under-glycosylated serum glycoproteins. Congenital disorders of glycosylation result in a wide variety of clinical features, such as defects in the nervous system development, psychomotor retardation, dysmorphic features, hypotonia, coagulation disorders, and immunodeficiency. The broad spectrum of features reflects the critical role of N-glycoproteins during embryonic development, differentiation, and maintenance of cell functions. CDG2V is an autosomal recessive form characterized by neurodevelopmental delay and variable facial dysmorphic features.</description>
        <dbReference type="MIM" id="619493"/>
    </disease>
    <text>The disease is caused by variants affecting the gene represented in this entry.</text>
</comment>
<comment type="similarity">
    <text evidence="13">Belongs to the glycosyl hydrolase 47 family.</text>
</comment>
<comment type="sequence caution" evidence="13">
    <conflict type="erroneous initiation">
        <sequence resource="EMBL-CDS" id="AAG60613"/>
    </conflict>
    <text>Truncated N-terminus.</text>
</comment>
<comment type="sequence caution" evidence="13">
    <conflict type="erroneous initiation">
        <sequence resource="EMBL-CDS" id="BAG37573"/>
    </conflict>
    <text>Truncated N-terminus.</text>
</comment>
<protein>
    <recommendedName>
        <fullName>ER degradation-enhancing alpha-mannosidase-like protein 3</fullName>
        <ecNumber evidence="3">3.2.1.113</ecNumber>
    </recommendedName>
    <alternativeName>
        <fullName>Alpha-1,2-mannosidase EDEM3</fullName>
    </alternativeName>
</protein>